<name>CT5AP_CONTE</name>
<keyword id="KW-0102">Bromination</keyword>
<keyword id="KW-0108">Calcium channel impairing toxin</keyword>
<keyword id="KW-0903">Direct protein sequencing</keyword>
<keyword id="KW-1015">Disulfide bond</keyword>
<keyword id="KW-0301">Gamma-carboxyglutamic acid</keyword>
<keyword id="KW-0325">Glycoprotein</keyword>
<keyword id="KW-0379">Hydroxylation</keyword>
<keyword id="KW-0872">Ion channel impairing toxin</keyword>
<keyword id="KW-0528">Neurotoxin</keyword>
<keyword id="KW-0638">Presynaptic neurotoxin</keyword>
<keyword id="KW-0964">Secreted</keyword>
<keyword id="KW-0732">Signal</keyword>
<keyword id="KW-0800">Toxin</keyword>
<accession>Q9BPG6</accession>
<protein>
    <recommendedName>
        <fullName evidence="6">Epsilon-conotoxin TxVA</fullName>
    </recommendedName>
    <alternativeName>
        <fullName evidence="8">Conotoxin TxMRCL-011</fullName>
    </alternativeName>
    <alternativeName>
        <fullName evidence="4 5">Epsilon-conotoxin TxIX</fullName>
    </alternativeName>
</protein>
<feature type="signal peptide" evidence="1">
    <location>
        <begin position="1"/>
        <end position="19"/>
    </location>
</feature>
<feature type="propeptide" id="PRO_0000404970" evidence="6">
    <location>
        <begin position="20"/>
        <end position="50"/>
    </location>
</feature>
<feature type="peptide" id="PRO_0000404971" description="Epsilon-conotoxin TxVA" evidence="2 3">
    <location>
        <begin position="51"/>
        <end position="63"/>
    </location>
</feature>
<feature type="propeptide" id="PRO_0000404972" evidence="6">
    <location>
        <begin position="64"/>
        <end position="67"/>
    </location>
</feature>
<feature type="modified residue" description="4-carboxyglutamate" evidence="2">
    <location>
        <position position="51"/>
    </location>
</feature>
<feature type="modified residue" description="4-carboxyglutamate" evidence="2">
    <location>
        <position position="54"/>
    </location>
</feature>
<feature type="modified residue" description="6'-bromotryptophan" evidence="2">
    <location>
        <position position="57"/>
    </location>
</feature>
<feature type="modified residue" description="4-hydroxyproline" evidence="2">
    <location>
        <position position="63"/>
    </location>
</feature>
<feature type="glycosylation site" description="O-linked (GalNAc...) threonine" evidence="2">
    <location>
        <position position="60"/>
    </location>
</feature>
<feature type="disulfide bond" evidence="2">
    <location>
        <begin position="52"/>
        <end position="58"/>
    </location>
</feature>
<feature type="disulfide bond" evidence="2">
    <location>
        <begin position="53"/>
        <end position="59"/>
    </location>
</feature>
<evidence type="ECO:0000255" key="1"/>
<evidence type="ECO:0000269" key="2">
    <source>
    </source>
</evidence>
<evidence type="ECO:0000269" key="3">
    <source>
    </source>
</evidence>
<evidence type="ECO:0000303" key="4">
    <source>
    </source>
</evidence>
<evidence type="ECO:0000303" key="5">
    <source>
    </source>
</evidence>
<evidence type="ECO:0000305" key="6"/>
<evidence type="ECO:0000305" key="7">
    <source>
    </source>
</evidence>
<evidence type="ECO:0000312" key="8">
    <source>
        <dbReference type="EMBL" id="AAG60390.1"/>
    </source>
</evidence>
<organism>
    <name type="scientific">Conus textile</name>
    <name type="common">Cloth-of-gold cone</name>
    <dbReference type="NCBI Taxonomy" id="6494"/>
    <lineage>
        <taxon>Eukaryota</taxon>
        <taxon>Metazoa</taxon>
        <taxon>Spiralia</taxon>
        <taxon>Lophotrochozoa</taxon>
        <taxon>Mollusca</taxon>
        <taxon>Gastropoda</taxon>
        <taxon>Caenogastropoda</taxon>
        <taxon>Neogastropoda</taxon>
        <taxon>Conoidea</taxon>
        <taxon>Conidae</taxon>
        <taxon>Conus</taxon>
        <taxon>Cylinder</taxon>
    </lineage>
</organism>
<sequence length="67" mass="7597">MRCFPVFIILLLLIASAPCFDARTKTDDDVPLSPLRDNLKRTIRTRLNIRECCEDGWCCTAAPLTGR</sequence>
<reference key="1">
    <citation type="journal article" date="2001" name="Mol. Biol. Evol.">
        <title>Mechanisms for evolving hypervariability: the case of conopeptides.</title>
        <authorList>
            <person name="Conticello S.G."/>
            <person name="Gilad Y."/>
            <person name="Avidan N."/>
            <person name="Ben-Asher E."/>
            <person name="Levy Z."/>
            <person name="Fainzilber M."/>
        </authorList>
    </citation>
    <scope>NUCLEOTIDE SEQUENCE [MRNA]</scope>
    <source>
        <tissue>Venom duct</tissue>
    </source>
</reference>
<reference key="2">
    <citation type="journal article" date="1999" name="Proc. Natl. Acad. Sci. U.S.A.">
        <title>A conotoxin from Conus textile with unusual posttranslational modifications reduces presynaptic Ca2+ influx.</title>
        <authorList>
            <person name="Rigby A.C."/>
            <person name="Lucas-Meunier E."/>
            <person name="Kalume D.E."/>
            <person name="Czerwiec E."/>
            <person name="Hambe B."/>
            <person name="Dahlqvist I."/>
            <person name="Fossier P."/>
            <person name="Baux G."/>
            <person name="Roepstorff P."/>
            <person name="Baleja J.D."/>
            <person name="Furie B.C."/>
            <person name="Furie B."/>
            <person name="Stenflo J.P."/>
        </authorList>
    </citation>
    <scope>PROTEIN SEQUENCE OF 51-63</scope>
    <scope>FUNCTION</scope>
    <scope>GAMMA-CARBOXYGLUTAMATION AT GLU-51 AND GLU-54</scope>
    <scope>BROMINATION AT TRP-57</scope>
    <scope>HYDROXYLATION AT PRO-63</scope>
    <scope>GLYCOSYLATION AT THR-60</scope>
    <scope>STRUCTURE BY NMR OF 51-63</scope>
    <scope>DISULFIDE BONDS</scope>
    <scope>SUBCELLULAR LOCATION</scope>
    <source>
        <tissue>Venom</tissue>
    </source>
</reference>
<reference key="3">
    <citation type="journal article" date="2000" name="J. Mass Spectrom.">
        <title>Structure determination of two conotoxins from Conus textile by a combination of matrix-assisted laser desorption/ionization time-of-flight and electrospray ionization mass spectrometry and biochemical methods.</title>
        <authorList>
            <person name="Kalume D.E."/>
            <person name="Stenflo J.P."/>
            <person name="Czerwiec E."/>
            <person name="Hambe B."/>
            <person name="Furie B.C."/>
            <person name="Furie B."/>
            <person name="Roepstorff P."/>
        </authorList>
    </citation>
    <scope>PROTEIN SEQUENCE OF 51-63</scope>
    <scope>MASS SPECTROMETRY</scope>
    <source>
        <tissue>Venom</tissue>
    </source>
</reference>
<proteinExistence type="evidence at protein level"/>
<comment type="function">
    <text evidence="2">Epsilon-conotoxins act at presynaptic membranes, blocking the calcium channels or G protein-coupled receptors. Causes hyperactivity upon intracranial injection into mice. Causes dorsal fins drooping in fish.</text>
</comment>
<comment type="subcellular location">
    <subcellularLocation>
        <location evidence="2">Secreted</location>
    </subcellularLocation>
</comment>
<comment type="tissue specificity">
    <text evidence="7">Expressed by the venom duct.</text>
</comment>
<comment type="domain">
    <text evidence="6">The cysteine framework is V (CC-CC).</text>
</comment>
<comment type="PTM">
    <text evidence="2">O-glycan consists of the disaccharide Gal-GalNAc.</text>
</comment>
<comment type="mass spectrometry" mass="1929.43" method="MALDI" evidence="3"/>
<comment type="similarity">
    <text evidence="6">Belongs to the conotoxin T superfamily.</text>
</comment>
<dbReference type="EMBL" id="AF214962">
    <property type="protein sequence ID" value="AAG60390.1"/>
    <property type="molecule type" value="mRNA"/>
</dbReference>
<dbReference type="SMR" id="Q9BPG6"/>
<dbReference type="iPTMnet" id="Q9BPG6"/>
<dbReference type="ConoServer" id="649">
    <property type="toxin name" value="TxVA precursor"/>
</dbReference>
<dbReference type="GO" id="GO:0005576">
    <property type="term" value="C:extracellular region"/>
    <property type="evidence" value="ECO:0007669"/>
    <property type="project" value="UniProtKB-SubCell"/>
</dbReference>
<dbReference type="GO" id="GO:0044231">
    <property type="term" value="C:host cell presynaptic membrane"/>
    <property type="evidence" value="ECO:0007669"/>
    <property type="project" value="UniProtKB-KW"/>
</dbReference>
<dbReference type="GO" id="GO:0005246">
    <property type="term" value="F:calcium channel regulator activity"/>
    <property type="evidence" value="ECO:0007669"/>
    <property type="project" value="UniProtKB-KW"/>
</dbReference>
<dbReference type="GO" id="GO:0090729">
    <property type="term" value="F:toxin activity"/>
    <property type="evidence" value="ECO:0007669"/>
    <property type="project" value="UniProtKB-KW"/>
</dbReference>
<dbReference type="InterPro" id="IPR031565">
    <property type="entry name" value="T-conotoxin"/>
</dbReference>
<dbReference type="Pfam" id="PF16981">
    <property type="entry name" value="Chi-conotoxin"/>
    <property type="match status" value="1"/>
</dbReference>